<feature type="chain" id="PRO_1000010269" description="Imidazoleglycerol-phosphate dehydratase">
    <location>
        <begin position="1"/>
        <end position="196"/>
    </location>
</feature>
<organism>
    <name type="scientific">Clostridium botulinum (strain Hall / ATCC 3502 / NCTC 13319 / Type A)</name>
    <dbReference type="NCBI Taxonomy" id="441771"/>
    <lineage>
        <taxon>Bacteria</taxon>
        <taxon>Bacillati</taxon>
        <taxon>Bacillota</taxon>
        <taxon>Clostridia</taxon>
        <taxon>Eubacteriales</taxon>
        <taxon>Clostridiaceae</taxon>
        <taxon>Clostridium</taxon>
    </lineage>
</organism>
<sequence length="196" mass="21796">MKESIAKVYRKTGETEIKSEINLYGEGKYDIKTGIGFFDHMLNLMARHGLIDVKLEAKGDLQVDSHHTVEDVGIVLGESFKKALGDKKGIKRYGTSFVPMDEALASVSIDISGRPYIVCDFNFTVDKLGEMDTELVEEFLRALAFNAGITLHARVLYGKNNHHMIEAVFKALGRALREAVDRDEKINGVMSTKGTL</sequence>
<reference key="1">
    <citation type="journal article" date="2007" name="Genome Res.">
        <title>Genome sequence of a proteolytic (Group I) Clostridium botulinum strain Hall A and comparative analysis of the clostridial genomes.</title>
        <authorList>
            <person name="Sebaihia M."/>
            <person name="Peck M.W."/>
            <person name="Minton N.P."/>
            <person name="Thomson N.R."/>
            <person name="Holden M.T.G."/>
            <person name="Mitchell W.J."/>
            <person name="Carter A.T."/>
            <person name="Bentley S.D."/>
            <person name="Mason D.R."/>
            <person name="Crossman L."/>
            <person name="Paul C.J."/>
            <person name="Ivens A."/>
            <person name="Wells-Bennik M.H.J."/>
            <person name="Davis I.J."/>
            <person name="Cerdeno-Tarraga A.M."/>
            <person name="Churcher C."/>
            <person name="Quail M.A."/>
            <person name="Chillingworth T."/>
            <person name="Feltwell T."/>
            <person name="Fraser A."/>
            <person name="Goodhead I."/>
            <person name="Hance Z."/>
            <person name="Jagels K."/>
            <person name="Larke N."/>
            <person name="Maddison M."/>
            <person name="Moule S."/>
            <person name="Mungall K."/>
            <person name="Norbertczak H."/>
            <person name="Rabbinowitsch E."/>
            <person name="Sanders M."/>
            <person name="Simmonds M."/>
            <person name="White B."/>
            <person name="Whithead S."/>
            <person name="Parkhill J."/>
        </authorList>
    </citation>
    <scope>NUCLEOTIDE SEQUENCE [LARGE SCALE GENOMIC DNA]</scope>
    <source>
        <strain>Hall / ATCC 3502 / NCTC 13319 / Type A</strain>
    </source>
</reference>
<reference key="2">
    <citation type="journal article" date="2007" name="PLoS ONE">
        <title>Analysis of the neurotoxin complex genes in Clostridium botulinum A1-A4 and B1 strains: BoNT/A3, /Ba4 and /B1 clusters are located within plasmids.</title>
        <authorList>
            <person name="Smith T.J."/>
            <person name="Hill K.K."/>
            <person name="Foley B.T."/>
            <person name="Detter J.C."/>
            <person name="Munk A.C."/>
            <person name="Bruce D.C."/>
            <person name="Doggett N.A."/>
            <person name="Smith L.A."/>
            <person name="Marks J.D."/>
            <person name="Xie G."/>
            <person name="Brettin T.S."/>
        </authorList>
    </citation>
    <scope>NUCLEOTIDE SEQUENCE [LARGE SCALE GENOMIC DNA]</scope>
    <source>
        <strain>Hall / ATCC 3502 / NCTC 13319 / Type A</strain>
    </source>
</reference>
<comment type="catalytic activity">
    <reaction evidence="1">
        <text>D-erythro-1-(imidazol-4-yl)glycerol 3-phosphate = 3-(imidazol-4-yl)-2-oxopropyl phosphate + H2O</text>
        <dbReference type="Rhea" id="RHEA:11040"/>
        <dbReference type="ChEBI" id="CHEBI:15377"/>
        <dbReference type="ChEBI" id="CHEBI:57766"/>
        <dbReference type="ChEBI" id="CHEBI:58278"/>
        <dbReference type="EC" id="4.2.1.19"/>
    </reaction>
</comment>
<comment type="pathway">
    <text evidence="1">Amino-acid biosynthesis; L-histidine biosynthesis; L-histidine from 5-phospho-alpha-D-ribose 1-diphosphate: step 6/9.</text>
</comment>
<comment type="subcellular location">
    <subcellularLocation>
        <location evidence="1">Cytoplasm</location>
    </subcellularLocation>
</comment>
<comment type="similarity">
    <text evidence="1">Belongs to the imidazoleglycerol-phosphate dehydratase family.</text>
</comment>
<gene>
    <name evidence="1" type="primary">hisB</name>
    <name type="ordered locus">CBO1568</name>
    <name type="ordered locus">CLC_1599</name>
</gene>
<protein>
    <recommendedName>
        <fullName evidence="1">Imidazoleglycerol-phosphate dehydratase</fullName>
        <shortName evidence="1">IGPD</shortName>
        <ecNumber evidence="1">4.2.1.19</ecNumber>
    </recommendedName>
</protein>
<evidence type="ECO:0000255" key="1">
    <source>
        <dbReference type="HAMAP-Rule" id="MF_00076"/>
    </source>
</evidence>
<keyword id="KW-0028">Amino-acid biosynthesis</keyword>
<keyword id="KW-0963">Cytoplasm</keyword>
<keyword id="KW-0368">Histidine biosynthesis</keyword>
<keyword id="KW-0456">Lyase</keyword>
<keyword id="KW-1185">Reference proteome</keyword>
<proteinExistence type="inferred from homology"/>
<name>HIS7_CLOBH</name>
<accession>A5I242</accession>
<accession>A7G3U4</accession>
<dbReference type="EC" id="4.2.1.19" evidence="1"/>
<dbReference type="EMBL" id="CP000727">
    <property type="protein sequence ID" value="ABS37058.1"/>
    <property type="molecule type" value="Genomic_DNA"/>
</dbReference>
<dbReference type="EMBL" id="AM412317">
    <property type="protein sequence ID" value="CAL83107.1"/>
    <property type="molecule type" value="Genomic_DNA"/>
</dbReference>
<dbReference type="RefSeq" id="WP_011949112.1">
    <property type="nucleotide sequence ID" value="NC_009698.1"/>
</dbReference>
<dbReference type="RefSeq" id="YP_001254075.1">
    <property type="nucleotide sequence ID" value="NC_009495.1"/>
</dbReference>
<dbReference type="RefSeq" id="YP_001387459.1">
    <property type="nucleotide sequence ID" value="NC_009698.1"/>
</dbReference>
<dbReference type="SMR" id="A5I242"/>
<dbReference type="GeneID" id="5187720"/>
<dbReference type="KEGG" id="cbh:CLC_1599"/>
<dbReference type="KEGG" id="cbo:CBO1568"/>
<dbReference type="PATRIC" id="fig|413999.7.peg.1544"/>
<dbReference type="HOGENOM" id="CLU_044308_2_0_9"/>
<dbReference type="UniPathway" id="UPA00031">
    <property type="reaction ID" value="UER00011"/>
</dbReference>
<dbReference type="PRO" id="PR:A5I242"/>
<dbReference type="Proteomes" id="UP000001986">
    <property type="component" value="Chromosome"/>
</dbReference>
<dbReference type="GO" id="GO:0005737">
    <property type="term" value="C:cytoplasm"/>
    <property type="evidence" value="ECO:0007669"/>
    <property type="project" value="UniProtKB-SubCell"/>
</dbReference>
<dbReference type="GO" id="GO:0004424">
    <property type="term" value="F:imidazoleglycerol-phosphate dehydratase activity"/>
    <property type="evidence" value="ECO:0000318"/>
    <property type="project" value="GO_Central"/>
</dbReference>
<dbReference type="GO" id="GO:0000105">
    <property type="term" value="P:L-histidine biosynthetic process"/>
    <property type="evidence" value="ECO:0000318"/>
    <property type="project" value="GO_Central"/>
</dbReference>
<dbReference type="CDD" id="cd07914">
    <property type="entry name" value="IGPD"/>
    <property type="match status" value="1"/>
</dbReference>
<dbReference type="FunFam" id="3.30.230.40:FF:000001">
    <property type="entry name" value="Imidazoleglycerol-phosphate dehydratase HisB"/>
    <property type="match status" value="1"/>
</dbReference>
<dbReference type="FunFam" id="3.30.230.40:FF:000003">
    <property type="entry name" value="Imidazoleglycerol-phosphate dehydratase HisB"/>
    <property type="match status" value="1"/>
</dbReference>
<dbReference type="Gene3D" id="3.30.230.40">
    <property type="entry name" value="Imidazole glycerol phosphate dehydratase, domain 1"/>
    <property type="match status" value="2"/>
</dbReference>
<dbReference type="HAMAP" id="MF_00076">
    <property type="entry name" value="HisB"/>
    <property type="match status" value="1"/>
</dbReference>
<dbReference type="InterPro" id="IPR038494">
    <property type="entry name" value="IGPD_sf"/>
</dbReference>
<dbReference type="InterPro" id="IPR000807">
    <property type="entry name" value="ImidazoleglycerolP_deHydtase"/>
</dbReference>
<dbReference type="InterPro" id="IPR020565">
    <property type="entry name" value="ImidazoleglycerP_deHydtase_CS"/>
</dbReference>
<dbReference type="InterPro" id="IPR020568">
    <property type="entry name" value="Ribosomal_Su5_D2-typ_SF"/>
</dbReference>
<dbReference type="NCBIfam" id="NF002107">
    <property type="entry name" value="PRK00951.1-2"/>
    <property type="match status" value="1"/>
</dbReference>
<dbReference type="NCBIfam" id="NF002109">
    <property type="entry name" value="PRK00951.1-5"/>
    <property type="match status" value="1"/>
</dbReference>
<dbReference type="NCBIfam" id="NF002111">
    <property type="entry name" value="PRK00951.2-1"/>
    <property type="match status" value="1"/>
</dbReference>
<dbReference type="NCBIfam" id="NF002112">
    <property type="entry name" value="PRK00951.2-2"/>
    <property type="match status" value="1"/>
</dbReference>
<dbReference type="NCBIfam" id="NF002114">
    <property type="entry name" value="PRK00951.2-4"/>
    <property type="match status" value="1"/>
</dbReference>
<dbReference type="NCBIfam" id="NF002116">
    <property type="entry name" value="PRK00951.2-6"/>
    <property type="match status" value="1"/>
</dbReference>
<dbReference type="PANTHER" id="PTHR23133:SF2">
    <property type="entry name" value="IMIDAZOLEGLYCEROL-PHOSPHATE DEHYDRATASE"/>
    <property type="match status" value="1"/>
</dbReference>
<dbReference type="PANTHER" id="PTHR23133">
    <property type="entry name" value="IMIDAZOLEGLYCEROL-PHOSPHATE DEHYDRATASE HIS7"/>
    <property type="match status" value="1"/>
</dbReference>
<dbReference type="Pfam" id="PF00475">
    <property type="entry name" value="IGPD"/>
    <property type="match status" value="1"/>
</dbReference>
<dbReference type="SUPFAM" id="SSF54211">
    <property type="entry name" value="Ribosomal protein S5 domain 2-like"/>
    <property type="match status" value="2"/>
</dbReference>
<dbReference type="PROSITE" id="PS00954">
    <property type="entry name" value="IGP_DEHYDRATASE_1"/>
    <property type="match status" value="1"/>
</dbReference>
<dbReference type="PROSITE" id="PS00955">
    <property type="entry name" value="IGP_DEHYDRATASE_2"/>
    <property type="match status" value="1"/>
</dbReference>